<name>RLME_MARMM</name>
<protein>
    <recommendedName>
        <fullName evidence="1">Ribosomal RNA large subunit methyltransferase E</fullName>
        <ecNumber evidence="1">2.1.1.166</ecNumber>
    </recommendedName>
    <alternativeName>
        <fullName evidence="1">23S rRNA Um2552 methyltransferase</fullName>
    </alternativeName>
    <alternativeName>
        <fullName evidence="1">rRNA (uridine-2'-O-)-methyltransferase</fullName>
    </alternativeName>
</protein>
<comment type="function">
    <text evidence="1">Specifically methylates the uridine in position 2552 of 23S rRNA at the 2'-O position of the ribose in the fully assembled 50S ribosomal subunit.</text>
</comment>
<comment type="catalytic activity">
    <reaction evidence="1">
        <text>uridine(2552) in 23S rRNA + S-adenosyl-L-methionine = 2'-O-methyluridine(2552) in 23S rRNA + S-adenosyl-L-homocysteine + H(+)</text>
        <dbReference type="Rhea" id="RHEA:42720"/>
        <dbReference type="Rhea" id="RHEA-COMP:10202"/>
        <dbReference type="Rhea" id="RHEA-COMP:10203"/>
        <dbReference type="ChEBI" id="CHEBI:15378"/>
        <dbReference type="ChEBI" id="CHEBI:57856"/>
        <dbReference type="ChEBI" id="CHEBI:59789"/>
        <dbReference type="ChEBI" id="CHEBI:65315"/>
        <dbReference type="ChEBI" id="CHEBI:74478"/>
        <dbReference type="EC" id="2.1.1.166"/>
    </reaction>
</comment>
<comment type="subcellular location">
    <subcellularLocation>
        <location evidence="1">Cytoplasm</location>
    </subcellularLocation>
</comment>
<comment type="similarity">
    <text evidence="1">Belongs to the class I-like SAM-binding methyltransferase superfamily. RNA methyltransferase RlmE family.</text>
</comment>
<gene>
    <name evidence="1" type="primary">rlmE</name>
    <name evidence="1" type="synonym">ftsJ</name>
    <name evidence="1" type="synonym">rrmJ</name>
    <name type="ordered locus">Mmar10_1171</name>
</gene>
<reference key="1">
    <citation type="submission" date="2006-08" db="EMBL/GenBank/DDBJ databases">
        <title>Complete sequence of Maricaulis maris MCS10.</title>
        <authorList>
            <consortium name="US DOE Joint Genome Institute"/>
            <person name="Copeland A."/>
            <person name="Lucas S."/>
            <person name="Lapidus A."/>
            <person name="Barry K."/>
            <person name="Detter J.C."/>
            <person name="Glavina del Rio T."/>
            <person name="Hammon N."/>
            <person name="Israni S."/>
            <person name="Dalin E."/>
            <person name="Tice H."/>
            <person name="Pitluck S."/>
            <person name="Saunders E."/>
            <person name="Brettin T."/>
            <person name="Bruce D."/>
            <person name="Han C."/>
            <person name="Tapia R."/>
            <person name="Gilna P."/>
            <person name="Schmutz J."/>
            <person name="Larimer F."/>
            <person name="Land M."/>
            <person name="Hauser L."/>
            <person name="Kyrpides N."/>
            <person name="Mikhailova N."/>
            <person name="Viollier P."/>
            <person name="Stephens C."/>
            <person name="Richardson P."/>
        </authorList>
    </citation>
    <scope>NUCLEOTIDE SEQUENCE [LARGE SCALE GENOMIC DNA]</scope>
    <source>
        <strain>MCS10</strain>
    </source>
</reference>
<organism>
    <name type="scientific">Maricaulis maris (strain MCS10)</name>
    <name type="common">Caulobacter maris</name>
    <dbReference type="NCBI Taxonomy" id="394221"/>
    <lineage>
        <taxon>Bacteria</taxon>
        <taxon>Pseudomonadati</taxon>
        <taxon>Pseudomonadota</taxon>
        <taxon>Alphaproteobacteria</taxon>
        <taxon>Maricaulales</taxon>
        <taxon>Maricaulaceae</taxon>
        <taxon>Maricaulis</taxon>
    </lineage>
</organism>
<keyword id="KW-0963">Cytoplasm</keyword>
<keyword id="KW-0489">Methyltransferase</keyword>
<keyword id="KW-1185">Reference proteome</keyword>
<keyword id="KW-0698">rRNA processing</keyword>
<keyword id="KW-0949">S-adenosyl-L-methionine</keyword>
<keyword id="KW-0808">Transferase</keyword>
<dbReference type="EC" id="2.1.1.166" evidence="1"/>
<dbReference type="EMBL" id="CP000449">
    <property type="protein sequence ID" value="ABI65464.1"/>
    <property type="molecule type" value="Genomic_DNA"/>
</dbReference>
<dbReference type="RefSeq" id="WP_011643111.1">
    <property type="nucleotide sequence ID" value="NC_008347.1"/>
</dbReference>
<dbReference type="SMR" id="Q0AQH3"/>
<dbReference type="STRING" id="394221.Mmar10_1171"/>
<dbReference type="KEGG" id="mmr:Mmar10_1171"/>
<dbReference type="eggNOG" id="COG0293">
    <property type="taxonomic scope" value="Bacteria"/>
</dbReference>
<dbReference type="HOGENOM" id="CLU_009422_4_2_5"/>
<dbReference type="OrthoDB" id="9790080at2"/>
<dbReference type="Proteomes" id="UP000001964">
    <property type="component" value="Chromosome"/>
</dbReference>
<dbReference type="GO" id="GO:0005737">
    <property type="term" value="C:cytoplasm"/>
    <property type="evidence" value="ECO:0007669"/>
    <property type="project" value="UniProtKB-SubCell"/>
</dbReference>
<dbReference type="GO" id="GO:0008650">
    <property type="term" value="F:rRNA (uridine-2'-O-)-methyltransferase activity"/>
    <property type="evidence" value="ECO:0007669"/>
    <property type="project" value="UniProtKB-UniRule"/>
</dbReference>
<dbReference type="Gene3D" id="3.40.50.150">
    <property type="entry name" value="Vaccinia Virus protein VP39"/>
    <property type="match status" value="1"/>
</dbReference>
<dbReference type="HAMAP" id="MF_01547">
    <property type="entry name" value="RNA_methyltr_E"/>
    <property type="match status" value="1"/>
</dbReference>
<dbReference type="InterPro" id="IPR050082">
    <property type="entry name" value="RNA_methyltr_RlmE"/>
</dbReference>
<dbReference type="InterPro" id="IPR002877">
    <property type="entry name" value="RNA_MeTrfase_FtsJ_dom"/>
</dbReference>
<dbReference type="InterPro" id="IPR015507">
    <property type="entry name" value="rRNA-MeTfrase_E"/>
</dbReference>
<dbReference type="InterPro" id="IPR029063">
    <property type="entry name" value="SAM-dependent_MTases_sf"/>
</dbReference>
<dbReference type="PANTHER" id="PTHR10920">
    <property type="entry name" value="RIBOSOMAL RNA METHYLTRANSFERASE"/>
    <property type="match status" value="1"/>
</dbReference>
<dbReference type="PANTHER" id="PTHR10920:SF18">
    <property type="entry name" value="RRNA METHYLTRANSFERASE 2, MITOCHONDRIAL"/>
    <property type="match status" value="1"/>
</dbReference>
<dbReference type="Pfam" id="PF01728">
    <property type="entry name" value="FtsJ"/>
    <property type="match status" value="1"/>
</dbReference>
<dbReference type="SUPFAM" id="SSF53335">
    <property type="entry name" value="S-adenosyl-L-methionine-dependent methyltransferases"/>
    <property type="match status" value="1"/>
</dbReference>
<proteinExistence type="inferred from homology"/>
<sequence length="279" mass="29964">MSDDDQKPEDATPDGSEPAENQPDGETPAAGEGAPDQAGLPGWGSSDKRRGRRSGPMKKGGDARAAKQMFERVKTARGRKSSSTRWLQRQLNDPYVKKAQMEGYRSRAAYKLLQLDERFKLLKPGMRVVDLGSAPGGWVQVALKSGASEVVGIDLLEMEAIAGATLLEKDFTDADAPSLVKAEMGGAADAVVSDLAPWTTGHKTTDHLRIVALAELAAHFAVETLKPGGFFIAKVFQGGSDSDLLNFLKANFEKVRHFKPDASRSESAETFVVAMGFKG</sequence>
<feature type="chain" id="PRO_0000282759" description="Ribosomal RNA large subunit methyltransferase E">
    <location>
        <begin position="1"/>
        <end position="279"/>
    </location>
</feature>
<feature type="region of interest" description="Disordered" evidence="2">
    <location>
        <begin position="1"/>
        <end position="66"/>
    </location>
</feature>
<feature type="compositionally biased region" description="Basic and acidic residues" evidence="2">
    <location>
        <begin position="1"/>
        <end position="10"/>
    </location>
</feature>
<feature type="active site" description="Proton acceptor" evidence="1">
    <location>
        <position position="234"/>
    </location>
</feature>
<feature type="binding site" evidence="1">
    <location>
        <position position="136"/>
    </location>
    <ligand>
        <name>S-adenosyl-L-methionine</name>
        <dbReference type="ChEBI" id="CHEBI:59789"/>
    </ligand>
</feature>
<feature type="binding site" evidence="1">
    <location>
        <position position="138"/>
    </location>
    <ligand>
        <name>S-adenosyl-L-methionine</name>
        <dbReference type="ChEBI" id="CHEBI:59789"/>
    </ligand>
</feature>
<feature type="binding site" evidence="1">
    <location>
        <position position="154"/>
    </location>
    <ligand>
        <name>S-adenosyl-L-methionine</name>
        <dbReference type="ChEBI" id="CHEBI:59789"/>
    </ligand>
</feature>
<feature type="binding site" evidence="1">
    <location>
        <position position="170"/>
    </location>
    <ligand>
        <name>S-adenosyl-L-methionine</name>
        <dbReference type="ChEBI" id="CHEBI:59789"/>
    </ligand>
</feature>
<feature type="binding site" evidence="1">
    <location>
        <position position="194"/>
    </location>
    <ligand>
        <name>S-adenosyl-L-methionine</name>
        <dbReference type="ChEBI" id="CHEBI:59789"/>
    </ligand>
</feature>
<accession>Q0AQH3</accession>
<evidence type="ECO:0000255" key="1">
    <source>
        <dbReference type="HAMAP-Rule" id="MF_01547"/>
    </source>
</evidence>
<evidence type="ECO:0000256" key="2">
    <source>
        <dbReference type="SAM" id="MobiDB-lite"/>
    </source>
</evidence>